<reference key="1">
    <citation type="journal article" date="2003" name="PLoS Biol.">
        <title>The genome sequence of Caenorhabditis briggsae: a platform for comparative genomics.</title>
        <authorList>
            <person name="Stein L.D."/>
            <person name="Bao Z."/>
            <person name="Blasiar D."/>
            <person name="Blumenthal T."/>
            <person name="Brent M.R."/>
            <person name="Chen N."/>
            <person name="Chinwalla A."/>
            <person name="Clarke L."/>
            <person name="Clee C."/>
            <person name="Coghlan A."/>
            <person name="Coulson A."/>
            <person name="D'Eustachio P."/>
            <person name="Fitch D.H.A."/>
            <person name="Fulton L.A."/>
            <person name="Fulton R.E."/>
            <person name="Griffiths-Jones S."/>
            <person name="Harris T.W."/>
            <person name="Hillier L.W."/>
            <person name="Kamath R."/>
            <person name="Kuwabara P.E."/>
            <person name="Mardis E.R."/>
            <person name="Marra M.A."/>
            <person name="Miner T.L."/>
            <person name="Minx P."/>
            <person name="Mullikin J.C."/>
            <person name="Plumb R.W."/>
            <person name="Rogers J."/>
            <person name="Schein J.E."/>
            <person name="Sohrmann M."/>
            <person name="Spieth J."/>
            <person name="Stajich J.E."/>
            <person name="Wei C."/>
            <person name="Willey D."/>
            <person name="Wilson R.K."/>
            <person name="Durbin R.M."/>
            <person name="Waterston R.H."/>
        </authorList>
    </citation>
    <scope>NUCLEOTIDE SEQUENCE [LARGE SCALE GENOMIC DNA]</scope>
    <source>
        <strain>AF16</strain>
    </source>
</reference>
<gene>
    <name type="primary">pcca-1</name>
    <name type="ORF">CBG16755</name>
</gene>
<evidence type="ECO:0000250" key="1"/>
<evidence type="ECO:0000250" key="2">
    <source>
        <dbReference type="UniProtKB" id="P05165"/>
    </source>
</evidence>
<evidence type="ECO:0000250" key="3">
    <source>
        <dbReference type="UniProtKB" id="P0DTA4"/>
    </source>
</evidence>
<evidence type="ECO:0000250" key="4">
    <source>
        <dbReference type="UniProtKB" id="Q19842"/>
    </source>
</evidence>
<evidence type="ECO:0000250" key="5">
    <source>
        <dbReference type="UniProtKB" id="Q5LUF3"/>
    </source>
</evidence>
<evidence type="ECO:0000255" key="6"/>
<evidence type="ECO:0000255" key="7">
    <source>
        <dbReference type="PROSITE-ProRule" id="PRU00409"/>
    </source>
</evidence>
<evidence type="ECO:0000255" key="8">
    <source>
        <dbReference type="PROSITE-ProRule" id="PRU00969"/>
    </source>
</evidence>
<evidence type="ECO:0000255" key="9">
    <source>
        <dbReference type="PROSITE-ProRule" id="PRU01066"/>
    </source>
</evidence>
<comment type="function">
    <text evidence="2 3 5">This is one of the 2 subunits of the biotin-dependent propionyl-CoA carboxylase (PCC), a mitochondrial enzyme involved in the catabolism of odd chain fatty acids, branched-chain amino acids isoleucine, threonine, methionine, and valine and other metabolites. Propionyl-CoA carboxylase catalyzes the carboxylation of propionyl-CoA/propanoyl-CoA to D-methylmalonyl-CoA/(S)-methylmalonyl-CoA (By similarity). Within the holoenzyme, the alpha subunit catalyzes the ATP-dependent carboxylation of the biotin carried by the biotin carboxyl carrier (BCC) domain, while the beta subunit then transfers the carboxyl group from carboxylated biotin to propionyl-CoA (By similarity). Propionyl-CoA carboxylase also significantly acts on butyryl-CoA/butanoyl-CoA, which is converted to ethylmalonyl-CoA/(2S)-ethylmalonyl-CoA (By similarity). Other alternative minor substrates include (2E)-butenoyl-CoA/crotonoyl-CoA (By similarity).</text>
</comment>
<comment type="catalytic activity">
    <reaction evidence="2">
        <text>propanoyl-CoA + hydrogencarbonate + ATP = (S)-methylmalonyl-CoA + ADP + phosphate + H(+)</text>
        <dbReference type="Rhea" id="RHEA:23720"/>
        <dbReference type="ChEBI" id="CHEBI:15378"/>
        <dbReference type="ChEBI" id="CHEBI:17544"/>
        <dbReference type="ChEBI" id="CHEBI:30616"/>
        <dbReference type="ChEBI" id="CHEBI:43474"/>
        <dbReference type="ChEBI" id="CHEBI:57327"/>
        <dbReference type="ChEBI" id="CHEBI:57392"/>
        <dbReference type="ChEBI" id="CHEBI:456216"/>
        <dbReference type="EC" id="6.4.1.3"/>
    </reaction>
    <physiologicalReaction direction="left-to-right" evidence="2">
        <dbReference type="Rhea" id="RHEA:23721"/>
    </physiologicalReaction>
</comment>
<comment type="catalytic activity">
    <reaction evidence="3">
        <text>butanoyl-CoA + hydrogencarbonate + ATP = (2S)-ethylmalonyl-CoA + ADP + phosphate + H(+)</text>
        <dbReference type="Rhea" id="RHEA:59520"/>
        <dbReference type="ChEBI" id="CHEBI:15378"/>
        <dbReference type="ChEBI" id="CHEBI:17544"/>
        <dbReference type="ChEBI" id="CHEBI:30616"/>
        <dbReference type="ChEBI" id="CHEBI:43474"/>
        <dbReference type="ChEBI" id="CHEBI:57371"/>
        <dbReference type="ChEBI" id="CHEBI:60909"/>
        <dbReference type="ChEBI" id="CHEBI:456216"/>
    </reaction>
    <physiologicalReaction direction="left-to-right" evidence="3">
        <dbReference type="Rhea" id="RHEA:59521"/>
    </physiologicalReaction>
</comment>
<comment type="cofactor">
    <cofactor evidence="9">
        <name>biotin</name>
        <dbReference type="ChEBI" id="CHEBI:57586"/>
    </cofactor>
</comment>
<comment type="cofactor">
    <cofactor evidence="7 8">
        <name>Mg(2+)</name>
        <dbReference type="ChEBI" id="CHEBI:18420"/>
    </cofactor>
    <cofactor evidence="7 8">
        <name>Mn(2+)</name>
        <dbReference type="ChEBI" id="CHEBI:29035"/>
    </cofactor>
    <text evidence="7 8">Binds 2 magnesium or manganese ions per subunit.</text>
</comment>
<comment type="pathway">
    <text evidence="2">Metabolic intermediate metabolism; propanoyl-CoA degradation; succinyl-CoA from propanoyl-CoA: step 1/3.</text>
</comment>
<comment type="subunit">
    <text evidence="2 4">The holoenzyme is a dodecamer composed of 6 alpha subunits and 6 beta subunits. Interacts with sir-2.2.</text>
</comment>
<comment type="subcellular location">
    <subcellularLocation>
        <location evidence="2">Mitochondrion matrix</location>
    </subcellularLocation>
</comment>
<comment type="domain">
    <text evidence="5">Consists of an N-terminal biotin carboxylation/carboxylase (BC) domain that catalyzes the transient carboxylation of the biotin covalently attached to the C-terminal biotinyl-binding/biotin carboxyl carrier (BCC) domain.</text>
</comment>
<comment type="PTM">
    <text evidence="2">The biotin cofactor is covalently attached to the C-terminal biotinyl-binding domain and is required for the catalytic activity.</text>
</comment>
<organism>
    <name type="scientific">Caenorhabditis briggsae</name>
    <dbReference type="NCBI Taxonomy" id="6238"/>
    <lineage>
        <taxon>Eukaryota</taxon>
        <taxon>Metazoa</taxon>
        <taxon>Ecdysozoa</taxon>
        <taxon>Nematoda</taxon>
        <taxon>Chromadorea</taxon>
        <taxon>Rhabditida</taxon>
        <taxon>Rhabditina</taxon>
        <taxon>Rhabditomorpha</taxon>
        <taxon>Rhabditoidea</taxon>
        <taxon>Rhabditidae</taxon>
        <taxon>Peloderinae</taxon>
        <taxon>Caenorhabditis</taxon>
    </lineage>
</organism>
<accession>Q612F5</accession>
<accession>A8XPR3</accession>
<protein>
    <recommendedName>
        <fullName evidence="4">Propionyl-CoA carboxylase alpha chain, mitochondrial</fullName>
        <shortName>PCCase subunit alpha</shortName>
        <ecNumber evidence="2">6.4.1.3</ecNumber>
    </recommendedName>
    <alternativeName>
        <fullName>Propanoyl-CoA:carbon dioxide ligase subunit alpha</fullName>
    </alternativeName>
</protein>
<dbReference type="EC" id="6.4.1.3" evidence="2"/>
<dbReference type="EMBL" id="HE600942">
    <property type="protein sequence ID" value="CAP34639.1"/>
    <property type="molecule type" value="Genomic_DNA"/>
</dbReference>
<dbReference type="SMR" id="Q612F5"/>
<dbReference type="FunCoup" id="Q612F5">
    <property type="interactions" value="1327"/>
</dbReference>
<dbReference type="STRING" id="6238.Q612F5"/>
<dbReference type="EnsemblMetazoa" id="CBG16755.1">
    <property type="protein sequence ID" value="CBG16755.1"/>
    <property type="gene ID" value="WBGene00036608"/>
</dbReference>
<dbReference type="KEGG" id="cbr:CBG_16755"/>
<dbReference type="CTD" id="8587079"/>
<dbReference type="WormBase" id="CBG16755">
    <property type="protein sequence ID" value="CBP18815"/>
    <property type="gene ID" value="WBGene00036608"/>
    <property type="gene designation" value="Cbr-pcca-1"/>
</dbReference>
<dbReference type="eggNOG" id="KOG0238">
    <property type="taxonomic scope" value="Eukaryota"/>
</dbReference>
<dbReference type="HOGENOM" id="CLU_000395_3_3_1"/>
<dbReference type="InParanoid" id="Q612F5"/>
<dbReference type="OMA" id="IGPKHYS"/>
<dbReference type="UniPathway" id="UPA00945">
    <property type="reaction ID" value="UER00908"/>
</dbReference>
<dbReference type="Proteomes" id="UP000008549">
    <property type="component" value="Unassembled WGS sequence"/>
</dbReference>
<dbReference type="GO" id="GO:0005759">
    <property type="term" value="C:mitochondrial matrix"/>
    <property type="evidence" value="ECO:0000250"/>
    <property type="project" value="UniProtKB"/>
</dbReference>
<dbReference type="GO" id="GO:0005739">
    <property type="term" value="C:mitochondrion"/>
    <property type="evidence" value="ECO:0000318"/>
    <property type="project" value="GO_Central"/>
</dbReference>
<dbReference type="GO" id="GO:0005524">
    <property type="term" value="F:ATP binding"/>
    <property type="evidence" value="ECO:0007669"/>
    <property type="project" value="UniProtKB-KW"/>
</dbReference>
<dbReference type="GO" id="GO:0046872">
    <property type="term" value="F:metal ion binding"/>
    <property type="evidence" value="ECO:0007669"/>
    <property type="project" value="UniProtKB-KW"/>
</dbReference>
<dbReference type="GO" id="GO:0004658">
    <property type="term" value="F:propionyl-CoA carboxylase activity"/>
    <property type="evidence" value="ECO:0000250"/>
    <property type="project" value="UniProtKB"/>
</dbReference>
<dbReference type="GO" id="GO:0016042">
    <property type="term" value="P:lipid catabolic process"/>
    <property type="evidence" value="ECO:0007669"/>
    <property type="project" value="UniProtKB-KW"/>
</dbReference>
<dbReference type="CDD" id="cd06850">
    <property type="entry name" value="biotinyl_domain"/>
    <property type="match status" value="1"/>
</dbReference>
<dbReference type="FunFam" id="2.40.50.100:FF:000003">
    <property type="entry name" value="Acetyl-CoA carboxylase biotin carboxyl carrier protein"/>
    <property type="match status" value="1"/>
</dbReference>
<dbReference type="FunFam" id="3.30.1490.20:FF:000003">
    <property type="entry name" value="acetyl-CoA carboxylase isoform X1"/>
    <property type="match status" value="1"/>
</dbReference>
<dbReference type="FunFam" id="3.30.470.20:FF:000028">
    <property type="entry name" value="Methylcrotonoyl-CoA carboxylase subunit alpha, mitochondrial"/>
    <property type="match status" value="1"/>
</dbReference>
<dbReference type="FunFam" id="3.40.50.20:FF:000010">
    <property type="entry name" value="Propionyl-CoA carboxylase subunit alpha"/>
    <property type="match status" value="1"/>
</dbReference>
<dbReference type="Gene3D" id="2.40.50.100">
    <property type="match status" value="1"/>
</dbReference>
<dbReference type="Gene3D" id="3.30.700.30">
    <property type="match status" value="1"/>
</dbReference>
<dbReference type="Gene3D" id="3.40.50.20">
    <property type="match status" value="1"/>
</dbReference>
<dbReference type="Gene3D" id="3.30.1490.20">
    <property type="entry name" value="ATP-grasp fold, A domain"/>
    <property type="match status" value="1"/>
</dbReference>
<dbReference type="Gene3D" id="3.30.470.20">
    <property type="entry name" value="ATP-grasp fold, B domain"/>
    <property type="match status" value="1"/>
</dbReference>
<dbReference type="InterPro" id="IPR011761">
    <property type="entry name" value="ATP-grasp"/>
</dbReference>
<dbReference type="InterPro" id="IPR013815">
    <property type="entry name" value="ATP_grasp_subdomain_1"/>
</dbReference>
<dbReference type="InterPro" id="IPR005481">
    <property type="entry name" value="BC-like_N"/>
</dbReference>
<dbReference type="InterPro" id="IPR001882">
    <property type="entry name" value="Biotin_BS"/>
</dbReference>
<dbReference type="InterPro" id="IPR050856">
    <property type="entry name" value="Biotin_carboxylase_complex"/>
</dbReference>
<dbReference type="InterPro" id="IPR011764">
    <property type="entry name" value="Biotin_carboxylation_dom"/>
</dbReference>
<dbReference type="InterPro" id="IPR005482">
    <property type="entry name" value="Biotin_COase_C"/>
</dbReference>
<dbReference type="InterPro" id="IPR000089">
    <property type="entry name" value="Biotin_lipoyl"/>
</dbReference>
<dbReference type="InterPro" id="IPR005479">
    <property type="entry name" value="CbamoylP_synth_lsu-like_ATP-bd"/>
</dbReference>
<dbReference type="InterPro" id="IPR041265">
    <property type="entry name" value="PCC_BT"/>
</dbReference>
<dbReference type="InterPro" id="IPR016185">
    <property type="entry name" value="PreATP-grasp_dom_sf"/>
</dbReference>
<dbReference type="InterPro" id="IPR011054">
    <property type="entry name" value="Rudment_hybrid_motif"/>
</dbReference>
<dbReference type="InterPro" id="IPR011053">
    <property type="entry name" value="Single_hybrid_motif"/>
</dbReference>
<dbReference type="NCBIfam" id="NF006367">
    <property type="entry name" value="PRK08591.1"/>
    <property type="match status" value="1"/>
</dbReference>
<dbReference type="PANTHER" id="PTHR18866">
    <property type="entry name" value="CARBOXYLASE:PYRUVATE/ACETYL-COA/PROPIONYL-COA CARBOXYLASE"/>
    <property type="match status" value="1"/>
</dbReference>
<dbReference type="PANTHER" id="PTHR18866:SF33">
    <property type="entry name" value="METHYLCROTONOYL-COA CARBOXYLASE SUBUNIT ALPHA, MITOCHONDRIAL-RELATED"/>
    <property type="match status" value="1"/>
</dbReference>
<dbReference type="Pfam" id="PF02785">
    <property type="entry name" value="Biotin_carb_C"/>
    <property type="match status" value="1"/>
</dbReference>
<dbReference type="Pfam" id="PF00289">
    <property type="entry name" value="Biotin_carb_N"/>
    <property type="match status" value="1"/>
</dbReference>
<dbReference type="Pfam" id="PF00364">
    <property type="entry name" value="Biotin_lipoyl"/>
    <property type="match status" value="1"/>
</dbReference>
<dbReference type="Pfam" id="PF02786">
    <property type="entry name" value="CPSase_L_D2"/>
    <property type="match status" value="1"/>
</dbReference>
<dbReference type="Pfam" id="PF18140">
    <property type="entry name" value="PCC_BT"/>
    <property type="match status" value="1"/>
</dbReference>
<dbReference type="SMART" id="SM00878">
    <property type="entry name" value="Biotin_carb_C"/>
    <property type="match status" value="1"/>
</dbReference>
<dbReference type="SUPFAM" id="SSF56059">
    <property type="entry name" value="Glutathione synthetase ATP-binding domain-like"/>
    <property type="match status" value="1"/>
</dbReference>
<dbReference type="SUPFAM" id="SSF52440">
    <property type="entry name" value="PreATP-grasp domain"/>
    <property type="match status" value="1"/>
</dbReference>
<dbReference type="SUPFAM" id="SSF51246">
    <property type="entry name" value="Rudiment single hybrid motif"/>
    <property type="match status" value="1"/>
</dbReference>
<dbReference type="SUPFAM" id="SSF51230">
    <property type="entry name" value="Single hybrid motif"/>
    <property type="match status" value="1"/>
</dbReference>
<dbReference type="PROSITE" id="PS50975">
    <property type="entry name" value="ATP_GRASP"/>
    <property type="match status" value="1"/>
</dbReference>
<dbReference type="PROSITE" id="PS50979">
    <property type="entry name" value="BC"/>
    <property type="match status" value="1"/>
</dbReference>
<dbReference type="PROSITE" id="PS00188">
    <property type="entry name" value="BIOTIN"/>
    <property type="match status" value="1"/>
</dbReference>
<dbReference type="PROSITE" id="PS50968">
    <property type="entry name" value="BIOTINYL_LIPOYL"/>
    <property type="match status" value="1"/>
</dbReference>
<dbReference type="PROSITE" id="PS00866">
    <property type="entry name" value="CPSASE_1"/>
    <property type="match status" value="1"/>
</dbReference>
<dbReference type="PROSITE" id="PS00867">
    <property type="entry name" value="CPSASE_2"/>
    <property type="match status" value="1"/>
</dbReference>
<name>PCCA_CAEBR</name>
<keyword id="KW-0067">ATP-binding</keyword>
<keyword id="KW-0092">Biotin</keyword>
<keyword id="KW-0436">Ligase</keyword>
<keyword id="KW-0442">Lipid degradation</keyword>
<keyword id="KW-0443">Lipid metabolism</keyword>
<keyword id="KW-0460">Magnesium</keyword>
<keyword id="KW-0464">Manganese</keyword>
<keyword id="KW-0479">Metal-binding</keyword>
<keyword id="KW-0496">Mitochondrion</keyword>
<keyword id="KW-0547">Nucleotide-binding</keyword>
<keyword id="KW-1185">Reference proteome</keyword>
<keyword id="KW-0809">Transit peptide</keyword>
<feature type="transit peptide" description="Mitochondrion" evidence="6">
    <location>
        <begin position="1"/>
        <end status="unknown"/>
    </location>
</feature>
<feature type="chain" id="PRO_0000234101" description="Propionyl-CoA carboxylase alpha chain, mitochondrial">
    <location>
        <begin status="unknown"/>
        <end position="738"/>
    </location>
</feature>
<feature type="domain" description="Biotin carboxylation" evidence="8">
    <location>
        <begin position="62"/>
        <end position="509"/>
    </location>
</feature>
<feature type="domain" description="ATP-grasp" evidence="7">
    <location>
        <begin position="181"/>
        <end position="378"/>
    </location>
</feature>
<feature type="domain" description="Biotinyl-binding" evidence="9">
    <location>
        <begin position="663"/>
        <end position="738"/>
    </location>
</feature>
<feature type="active site" evidence="1">
    <location>
        <position position="353"/>
    </location>
</feature>
<feature type="binding site" evidence="2">
    <location>
        <position position="177"/>
    </location>
    <ligand>
        <name>ATP</name>
        <dbReference type="ChEBI" id="CHEBI:30616"/>
    </ligand>
</feature>
<feature type="binding site" evidence="7">
    <location>
        <begin position="209"/>
        <end position="270"/>
    </location>
    <ligand>
        <name>ATP</name>
        <dbReference type="ChEBI" id="CHEBI:30616"/>
    </ligand>
</feature>
<feature type="binding site" evidence="2">
    <location>
        <position position="261"/>
    </location>
    <ligand>
        <name>ATP</name>
        <dbReference type="ChEBI" id="CHEBI:30616"/>
    </ligand>
</feature>
<feature type="binding site" evidence="2">
    <location>
        <position position="296"/>
    </location>
    <ligand>
        <name>ATP</name>
        <dbReference type="ChEBI" id="CHEBI:30616"/>
    </ligand>
</feature>
<feature type="binding site" evidence="7 8">
    <location>
        <position position="336"/>
    </location>
    <ligand>
        <name>Mg(2+)</name>
        <dbReference type="ChEBI" id="CHEBI:18420"/>
        <label>1</label>
    </ligand>
</feature>
<feature type="binding site" evidence="7 8">
    <location>
        <position position="336"/>
    </location>
    <ligand>
        <name>Mn(2+)</name>
        <dbReference type="ChEBI" id="CHEBI:29035"/>
        <label>1</label>
    </ligand>
</feature>
<feature type="binding site" evidence="7 8">
    <location>
        <position position="349"/>
    </location>
    <ligand>
        <name>Mg(2+)</name>
        <dbReference type="ChEBI" id="CHEBI:18420"/>
        <label>1</label>
    </ligand>
</feature>
<feature type="binding site" evidence="7 8">
    <location>
        <position position="349"/>
    </location>
    <ligand>
        <name>Mg(2+)</name>
        <dbReference type="ChEBI" id="CHEBI:18420"/>
        <label>2</label>
    </ligand>
</feature>
<feature type="binding site" evidence="7 8">
    <location>
        <position position="349"/>
    </location>
    <ligand>
        <name>Mn(2+)</name>
        <dbReference type="ChEBI" id="CHEBI:29035"/>
        <label>1</label>
    </ligand>
</feature>
<feature type="binding site" evidence="7 8">
    <location>
        <position position="349"/>
    </location>
    <ligand>
        <name>Mn(2+)</name>
        <dbReference type="ChEBI" id="CHEBI:29035"/>
        <label>2</label>
    </ligand>
</feature>
<feature type="binding site" evidence="7 8">
    <location>
        <position position="351"/>
    </location>
    <ligand>
        <name>Mg(2+)</name>
        <dbReference type="ChEBI" id="CHEBI:18420"/>
        <label>2</label>
    </ligand>
</feature>
<feature type="binding site" evidence="7 8">
    <location>
        <position position="351"/>
    </location>
    <ligand>
        <name>Mn(2+)</name>
        <dbReference type="ChEBI" id="CHEBI:29035"/>
        <label>2</label>
    </ligand>
</feature>
<feature type="binding site" evidence="5">
    <location>
        <position position="409"/>
    </location>
    <ligand>
        <name>biotin</name>
        <dbReference type="ChEBI" id="CHEBI:57586"/>
    </ligand>
</feature>
<feature type="modified residue" description="N6-biotinyllysine" evidence="2 9">
    <location>
        <position position="704"/>
    </location>
</feature>
<sequence>MLRAASNFRAVANREFACAKRQLSKTTRKNATAAATRPGVPRDEREGKEIYTTVGIDHNEPKFDKILIANRGEIACRVIKTAKAMGIKTVAVHSDVDSNSLHVKMADEAICVGEAPTAKSYLRVDRILQAVEDTGAQAVHPGYGFLSENTKFAAELEKAGAKFIGPNSKAILDMGDKIHSKKIATAARVSMIPGYDGEIPEEDFCVKVSREIGYPVMIKASAGGGGKGMRVAWNDKQAREGYRLSKQEAASSFGDDRMLVEKFIDNPRHIEMQILCDKHGNALWLNERECSIQRRNQKVIEEAPSSFVPPEMRRKMGEQAVQLAKAVGYDSAGTVEFLVDSQRNFYFLEMNTRLQVEHPITECITGIDIVQQMLRVAYGHSLPLTQEQVPLNGWAFESRVYAEDPYKGFGLPSVGRLSKYVEPRHVDGVRCDSGIREGSEISIYYDPLICKLVTHGDNRQQALDRMQEALDNYVIRGVTHNIPLLRDIVQEKRFRSGDITTKYLPEVYPEGFQGTVLTHAEEKTVIAFAAALNARKLARANQFLNQNRQRSTHVASFSKTYKFVSSLPAKEGQRPTEHAVEVSFVDGDANKAKVSIGGKVIDISGNLSLSLPVNSIEVNGEHITTQIVGKRAGEITVLYKGTPFKVQVLPEQAVKYLQYMKEKAKVDLSTVVLSPMPGAIKNVNVKPGDMVSEGQELVVMEAMKMQNSLHAGKTGRVKAVNVKVGATVDEGEVLVELE</sequence>
<proteinExistence type="inferred from homology"/>